<evidence type="ECO:0000255" key="1">
    <source>
        <dbReference type="HAMAP-Rule" id="MF_00632"/>
    </source>
</evidence>
<feature type="chain" id="PRO_1000147310" description="Nucleotide-binding protein SAR11_0692">
    <location>
        <begin position="1"/>
        <end position="161"/>
    </location>
</feature>
<dbReference type="EMBL" id="CP000084">
    <property type="protein sequence ID" value="AAZ21511.1"/>
    <property type="molecule type" value="Genomic_DNA"/>
</dbReference>
<dbReference type="RefSeq" id="WP_011281874.1">
    <property type="nucleotide sequence ID" value="NC_007205.1"/>
</dbReference>
<dbReference type="SMR" id="Q4FMS8"/>
<dbReference type="STRING" id="335992.SAR11_0692"/>
<dbReference type="GeneID" id="66295195"/>
<dbReference type="KEGG" id="pub:SAR11_0692"/>
<dbReference type="eggNOG" id="COG1666">
    <property type="taxonomic scope" value="Bacteria"/>
</dbReference>
<dbReference type="HOGENOM" id="CLU_099839_1_0_5"/>
<dbReference type="OrthoDB" id="9801447at2"/>
<dbReference type="Proteomes" id="UP000002528">
    <property type="component" value="Chromosome"/>
</dbReference>
<dbReference type="GO" id="GO:0005829">
    <property type="term" value="C:cytosol"/>
    <property type="evidence" value="ECO:0007669"/>
    <property type="project" value="TreeGrafter"/>
</dbReference>
<dbReference type="GO" id="GO:0000166">
    <property type="term" value="F:nucleotide binding"/>
    <property type="evidence" value="ECO:0007669"/>
    <property type="project" value="TreeGrafter"/>
</dbReference>
<dbReference type="CDD" id="cd11740">
    <property type="entry name" value="YajQ_like"/>
    <property type="match status" value="1"/>
</dbReference>
<dbReference type="Gene3D" id="3.30.70.860">
    <property type="match status" value="1"/>
</dbReference>
<dbReference type="Gene3D" id="3.30.70.990">
    <property type="entry name" value="YajQ-like, domain 2"/>
    <property type="match status" value="1"/>
</dbReference>
<dbReference type="HAMAP" id="MF_00632">
    <property type="entry name" value="YajQ"/>
    <property type="match status" value="1"/>
</dbReference>
<dbReference type="InterPro" id="IPR007551">
    <property type="entry name" value="DUF520"/>
</dbReference>
<dbReference type="InterPro" id="IPR035571">
    <property type="entry name" value="UPF0234-like_C"/>
</dbReference>
<dbReference type="InterPro" id="IPR035570">
    <property type="entry name" value="UPF0234_N"/>
</dbReference>
<dbReference type="InterPro" id="IPR036183">
    <property type="entry name" value="YajQ-like_sf"/>
</dbReference>
<dbReference type="NCBIfam" id="NF003819">
    <property type="entry name" value="PRK05412.1"/>
    <property type="match status" value="1"/>
</dbReference>
<dbReference type="PANTHER" id="PTHR30476">
    <property type="entry name" value="UPF0234 PROTEIN YAJQ"/>
    <property type="match status" value="1"/>
</dbReference>
<dbReference type="PANTHER" id="PTHR30476:SF0">
    <property type="entry name" value="UPF0234 PROTEIN YAJQ"/>
    <property type="match status" value="1"/>
</dbReference>
<dbReference type="Pfam" id="PF04461">
    <property type="entry name" value="DUF520"/>
    <property type="match status" value="1"/>
</dbReference>
<dbReference type="SUPFAM" id="SSF89963">
    <property type="entry name" value="YajQ-like"/>
    <property type="match status" value="2"/>
</dbReference>
<keyword id="KW-0547">Nucleotide-binding</keyword>
<keyword id="KW-1185">Reference proteome</keyword>
<organism>
    <name type="scientific">Pelagibacter ubique (strain HTCC1062)</name>
    <dbReference type="NCBI Taxonomy" id="335992"/>
    <lineage>
        <taxon>Bacteria</taxon>
        <taxon>Pseudomonadati</taxon>
        <taxon>Pseudomonadota</taxon>
        <taxon>Alphaproteobacteria</taxon>
        <taxon>Candidatus Pelagibacterales</taxon>
        <taxon>Candidatus Pelagibacteraceae</taxon>
        <taxon>Candidatus Pelagibacter</taxon>
    </lineage>
</organism>
<name>Y692_PELUB</name>
<sequence>MPSFDVISKVSYPEFDNALANCLREIGNRFDFKGLHISIERKDKIITTLAPDELKLKQVNELLQVHLIRRKVDPRVLSIKNSENAAGSSIRQVSELQEGISQENAKKIITEIKKLKLKIQIKIQGEELRAEGKKRDDLQEAMSAITAIDIGLPVEFVNFRD</sequence>
<gene>
    <name type="ordered locus">SAR11_0692</name>
</gene>
<proteinExistence type="inferred from homology"/>
<comment type="function">
    <text evidence="1">Nucleotide-binding protein.</text>
</comment>
<comment type="similarity">
    <text evidence="1">Belongs to the YajQ family.</text>
</comment>
<protein>
    <recommendedName>
        <fullName evidence="1">Nucleotide-binding protein SAR11_0692</fullName>
    </recommendedName>
</protein>
<accession>Q4FMS8</accession>
<reference key="1">
    <citation type="journal article" date="2005" name="Science">
        <title>Genome streamlining in a cosmopolitan oceanic bacterium.</title>
        <authorList>
            <person name="Giovannoni S.J."/>
            <person name="Tripp H.J."/>
            <person name="Givan S."/>
            <person name="Podar M."/>
            <person name="Vergin K.L."/>
            <person name="Baptista D."/>
            <person name="Bibbs L."/>
            <person name="Eads J."/>
            <person name="Richardson T.H."/>
            <person name="Noordewier M."/>
            <person name="Rappe M.S."/>
            <person name="Short J.M."/>
            <person name="Carrington J.C."/>
            <person name="Mathur E.J."/>
        </authorList>
    </citation>
    <scope>NUCLEOTIDE SEQUENCE [LARGE SCALE GENOMIC DNA]</scope>
    <source>
        <strain>HTCC1062</strain>
    </source>
</reference>